<proteinExistence type="evidence at protein level"/>
<accession>P33015</accession>
<gene>
    <name evidence="5" type="primary">tsuA</name>
    <name type="synonym">yeeE</name>
    <name type="ordered locus">b2013</name>
    <name type="ordered locus">JW1995</name>
</gene>
<keyword id="KW-0997">Cell inner membrane</keyword>
<keyword id="KW-1003">Cell membrane</keyword>
<keyword id="KW-0472">Membrane</keyword>
<keyword id="KW-1185">Reference proteome</keyword>
<keyword id="KW-0764">Sulfate transport</keyword>
<keyword id="KW-0812">Transmembrane</keyword>
<keyword id="KW-1133">Transmembrane helix</keyword>
<keyword id="KW-0813">Transport</keyword>
<dbReference type="EMBL" id="U00009">
    <property type="protein sequence ID" value="AAA16419.1"/>
    <property type="molecule type" value="Genomic_DNA"/>
</dbReference>
<dbReference type="EMBL" id="U00096">
    <property type="protein sequence ID" value="AAC75074.1"/>
    <property type="molecule type" value="Genomic_DNA"/>
</dbReference>
<dbReference type="EMBL" id="AP009048">
    <property type="protein sequence ID" value="BAA15841.1"/>
    <property type="molecule type" value="Genomic_DNA"/>
</dbReference>
<dbReference type="PIR" id="D64966">
    <property type="entry name" value="D64966"/>
</dbReference>
<dbReference type="RefSeq" id="NP_416517.1">
    <property type="nucleotide sequence ID" value="NC_000913.3"/>
</dbReference>
<dbReference type="RefSeq" id="WP_000492339.1">
    <property type="nucleotide sequence ID" value="NZ_LN832404.1"/>
</dbReference>
<dbReference type="SMR" id="P33015"/>
<dbReference type="BioGRID" id="4260416">
    <property type="interactions" value="7"/>
</dbReference>
<dbReference type="FunCoup" id="P33015">
    <property type="interactions" value="5"/>
</dbReference>
<dbReference type="STRING" id="511145.b2013"/>
<dbReference type="TCDB" id="9.B.102.1.2">
    <property type="family name" value="the yede/yeee (yede/yeee) family"/>
</dbReference>
<dbReference type="PaxDb" id="511145-b2013"/>
<dbReference type="EnsemblBacteria" id="AAC75074">
    <property type="protein sequence ID" value="AAC75074"/>
    <property type="gene ID" value="b2013"/>
</dbReference>
<dbReference type="GeneID" id="946526"/>
<dbReference type="KEGG" id="ecj:JW1995"/>
<dbReference type="KEGG" id="eco:b2013"/>
<dbReference type="KEGG" id="ecoc:C3026_11355"/>
<dbReference type="PATRIC" id="fig|511145.12.peg.2090"/>
<dbReference type="EchoBASE" id="EB1841"/>
<dbReference type="eggNOG" id="COG2391">
    <property type="taxonomic scope" value="Bacteria"/>
</dbReference>
<dbReference type="HOGENOM" id="CLU_050656_0_1_6"/>
<dbReference type="InParanoid" id="P33015"/>
<dbReference type="OMA" id="LQRTHFC"/>
<dbReference type="OrthoDB" id="9794165at2"/>
<dbReference type="PhylomeDB" id="P33015"/>
<dbReference type="BioCyc" id="EcoCyc:EG11895-MONOMER"/>
<dbReference type="BioCyc" id="MetaCyc:EG11895-MONOMER"/>
<dbReference type="PRO" id="PR:P33015"/>
<dbReference type="Proteomes" id="UP000000625">
    <property type="component" value="Chromosome"/>
</dbReference>
<dbReference type="GO" id="GO:0005886">
    <property type="term" value="C:plasma membrane"/>
    <property type="evidence" value="ECO:0000314"/>
    <property type="project" value="EcoCyc"/>
</dbReference>
<dbReference type="GO" id="GO:0015117">
    <property type="term" value="F:thiosulfate transmembrane transporter activity"/>
    <property type="evidence" value="ECO:0000315"/>
    <property type="project" value="EcoCyc"/>
</dbReference>
<dbReference type="GO" id="GO:0015709">
    <property type="term" value="P:thiosulfate transport"/>
    <property type="evidence" value="ECO:0000315"/>
    <property type="project" value="EcoCyc"/>
</dbReference>
<dbReference type="InterPro" id="IPR007272">
    <property type="entry name" value="Sulf_transp_TsuA/YedE"/>
</dbReference>
<dbReference type="InterPro" id="IPR047733">
    <property type="entry name" value="TsuA-like"/>
</dbReference>
<dbReference type="NCBIfam" id="NF041049">
    <property type="entry name" value="thio_trans_TsuA"/>
    <property type="match status" value="1"/>
</dbReference>
<dbReference type="PANTHER" id="PTHR30574">
    <property type="entry name" value="INNER MEMBRANE PROTEIN YEDE"/>
    <property type="match status" value="1"/>
</dbReference>
<dbReference type="PANTHER" id="PTHR30574:SF1">
    <property type="entry name" value="SULPHUR TRANSPORT DOMAIN-CONTAINING PROTEIN"/>
    <property type="match status" value="1"/>
</dbReference>
<dbReference type="Pfam" id="PF04143">
    <property type="entry name" value="Sulf_transp"/>
    <property type="match status" value="1"/>
</dbReference>
<protein>
    <recommendedName>
        <fullName evidence="6">Thiosulfate transporter TsuA</fullName>
    </recommendedName>
    <alternativeName>
        <fullName evidence="5">Thiosulfate uptake protein A</fullName>
    </alternativeName>
</protein>
<comment type="function">
    <text evidence="3 4">Mediates thiosulfate uptake.</text>
</comment>
<comment type="catalytic activity">
    <reaction evidence="7">
        <text>thiosulfate(in) = thiosulfate(out)</text>
        <dbReference type="Rhea" id="RHEA:32807"/>
        <dbReference type="ChEBI" id="CHEBI:33542"/>
    </reaction>
    <physiologicalReaction direction="right-to-left" evidence="7">
        <dbReference type="Rhea" id="RHEA:32809"/>
    </physiologicalReaction>
</comment>
<comment type="subcellular location">
    <subcellularLocation>
        <location evidence="2">Cell inner membrane</location>
        <topology evidence="1">Multi-pass membrane protein</topology>
    </subcellularLocation>
</comment>
<comment type="induction">
    <text evidence="3">Member of the CysB regulon (PubMed:32779574). mRNA levels are increased by disruption of the rppH gene, which encodes a RNA pyrophosphohydrolase (PubMed:32779574).</text>
</comment>
<comment type="disruption phenotype">
    <text evidence="3 4">The tsuA-cysPUWA and tsuA-cysA deletion mutants cannot grow with thiosulfate as sole sulfur source.</text>
</comment>
<comment type="similarity">
    <text evidence="6">Belongs to the TsuA/YedE (TC 9.B.102) family.</text>
</comment>
<feature type="chain" id="PRO_0000169107" description="Thiosulfate transporter TsuA">
    <location>
        <begin position="1"/>
        <end position="352"/>
    </location>
</feature>
<feature type="transmembrane region" description="Helical" evidence="1">
    <location>
        <begin position="1"/>
        <end position="21"/>
    </location>
</feature>
<feature type="topological domain" description="Cytoplasmic" evidence="6">
    <location>
        <begin position="22"/>
        <end position="44"/>
    </location>
</feature>
<feature type="transmembrane region" description="Helical" evidence="1">
    <location>
        <begin position="45"/>
        <end position="65"/>
    </location>
</feature>
<feature type="topological domain" description="Periplasmic" evidence="6">
    <location>
        <begin position="66"/>
        <end position="70"/>
    </location>
</feature>
<feature type="transmembrane region" description="Helical" evidence="1">
    <location>
        <begin position="71"/>
        <end position="91"/>
    </location>
</feature>
<feature type="topological domain" description="Cytoplasmic" evidence="6">
    <location>
        <begin position="92"/>
        <end position="102"/>
    </location>
</feature>
<feature type="transmembrane region" description="Helical" evidence="1">
    <location>
        <begin position="103"/>
        <end position="123"/>
    </location>
</feature>
<feature type="topological domain" description="Periplasmic" evidence="6">
    <location>
        <begin position="124"/>
        <end position="148"/>
    </location>
</feature>
<feature type="transmembrane region" description="Helical" evidence="1">
    <location>
        <begin position="149"/>
        <end position="169"/>
    </location>
</feature>
<feature type="topological domain" description="Cytoplasmic" evidence="6">
    <location>
        <begin position="170"/>
        <end position="197"/>
    </location>
</feature>
<feature type="transmembrane region" description="Helical" evidence="1">
    <location>
        <begin position="198"/>
        <end position="218"/>
    </location>
</feature>
<feature type="topological domain" description="Periplasmic" evidence="6">
    <location>
        <begin position="219"/>
        <end position="247"/>
    </location>
</feature>
<feature type="transmembrane region" description="Helical" evidence="1">
    <location>
        <begin position="248"/>
        <end position="268"/>
    </location>
</feature>
<feature type="topological domain" description="Cytoplasmic" evidence="6">
    <location>
        <begin position="269"/>
        <end position="289"/>
    </location>
</feature>
<feature type="transmembrane region" description="Helical" evidence="1">
    <location>
        <begin position="290"/>
        <end position="310"/>
    </location>
</feature>
<feature type="topological domain" description="Periplasmic" evidence="6">
    <location>
        <begin position="311"/>
        <end position="317"/>
    </location>
</feature>
<feature type="transmembrane region" description="Helical" evidence="1">
    <location>
        <begin position="318"/>
        <end position="338"/>
    </location>
</feature>
<feature type="topological domain" description="Cytoplasmic" evidence="2">
    <location>
        <begin position="339"/>
        <end position="352"/>
    </location>
</feature>
<feature type="mutagenesis site" description="Cannot complement a cysPUWA-tsuA deletion mutant." evidence="4">
    <original>C</original>
    <variation>A</variation>
    <location>
        <position position="25"/>
    </location>
</feature>
<feature type="mutagenesis site" description="Cannot complement a cysPUWA-tsuA deletion mutant." evidence="4">
    <original>C</original>
    <variation>S</variation>
    <location>
        <position position="25"/>
    </location>
</feature>
<feature type="mutagenesis site" description="Can complement a cysPUWA-tsuA deletion mutant." evidence="4">
    <original>T</original>
    <variation>A</variation>
    <location>
        <position position="27"/>
    </location>
</feature>
<feature type="mutagenesis site" description="Cannot complement a cysPUWA-tsuA deletion mutant." evidence="4">
    <original>R</original>
    <variation>A</variation>
    <location>
        <position position="31"/>
    </location>
</feature>
<feature type="mutagenesis site" description="Can complement a cysPUWA-tsuA deletion mutant." evidence="4">
    <original>G</original>
    <variation>A</variation>
    <location>
        <position position="70"/>
    </location>
</feature>
<feature type="mutagenesis site" description="Cannot complement a cysPUWA-tsuA deletion mutant." evidence="4">
    <original>F</original>
    <variation>A</variation>
    <location>
        <position position="84"/>
    </location>
</feature>
<feature type="mutagenesis site" description="Cannot complement a cysPUWA-tsuA deletion mutant." evidence="4">
    <original>C</original>
    <variation>A</variation>
    <location>
        <position position="94"/>
    </location>
</feature>
<feature type="mutagenesis site" description="Cannot complement a cysPUWA-tsuA deletion mutant." evidence="4">
    <original>C</original>
    <variation>S</variation>
    <location>
        <position position="94"/>
    </location>
</feature>
<feature type="mutagenesis site" description="Cannot complement a cysPUWA-tsuA deletion mutant." evidence="4">
    <original>Y</original>
    <variation>A</variation>
    <location>
        <position position="116"/>
    </location>
</feature>
<feature type="mutagenesis site" description="Cannot complement a cysPUWA-tsuA deletion mutant." evidence="4">
    <original>R</original>
    <variation>A</variation>
    <location>
        <position position="223"/>
    </location>
</feature>
<feature type="mutagenesis site" description="Cannot complement a cysPUWA-tsuA deletion mutant." evidence="4">
    <original>T</original>
    <variation>A</variation>
    <location>
        <position position="230"/>
    </location>
</feature>
<feature type="mutagenesis site" description="Can complement a cysPUWA-tsuA deletion mutant." evidence="4">
    <original>G</original>
    <variation>A</variation>
    <location>
        <position position="251"/>
    </location>
</feature>
<feature type="mutagenesis site" description="Cannot complement a cysPUWA-tsuA deletion mutant." evidence="4">
    <original>M</original>
    <variation>A</variation>
    <location>
        <position position="292"/>
    </location>
</feature>
<feature type="mutagenesis site" description="Cannot complement a cysPUWA-tsuA deletion mutant." evidence="4">
    <original>C</original>
    <variation>A</variation>
    <location>
        <position position="302"/>
    </location>
</feature>
<feature type="mutagenesis site" description="Cannot complement a cysPUWA-tsuA deletion mutant." evidence="4">
    <original>C</original>
    <variation>S</variation>
    <location>
        <position position="302"/>
    </location>
</feature>
<feature type="mutagenesis site" description="Cannot complement a cysPUWA-tsuA deletion mutant." evidence="4">
    <original>S</original>
    <variation>A</variation>
    <location>
        <position position="303"/>
    </location>
</feature>
<feature type="mutagenesis site" description="Can complement a cysPUWA-tsuA deletion mutant." evidence="4">
    <original>N</original>
    <variation>A</variation>
    <location>
        <position position="306"/>
    </location>
</feature>
<feature type="mutagenesis site" description="Can complement a cysPUWA-tsuA deletion mutant." evidence="4">
    <original>V</original>
    <variation>A</variation>
    <location>
        <position position="329"/>
    </location>
</feature>
<reference key="1">
    <citation type="submission" date="1993-10" db="EMBL/GenBank/DDBJ databases">
        <title>Automated multiplex sequencing of the E.coli genome.</title>
        <authorList>
            <person name="Richterich P."/>
            <person name="Lakey N."/>
            <person name="Gryan G."/>
            <person name="Jaehn L."/>
            <person name="Mintz L."/>
            <person name="Robison K."/>
            <person name="Church G.M."/>
        </authorList>
    </citation>
    <scope>NUCLEOTIDE SEQUENCE [LARGE SCALE GENOMIC DNA]</scope>
    <source>
        <strain>K12 / BHB2600</strain>
    </source>
</reference>
<reference key="2">
    <citation type="journal article" date="1996" name="DNA Res.">
        <title>A 460-kb DNA sequence of the Escherichia coli K-12 genome corresponding to the 40.1-50.0 min region on the linkage map.</title>
        <authorList>
            <person name="Itoh T."/>
            <person name="Aiba H."/>
            <person name="Baba T."/>
            <person name="Fujita K."/>
            <person name="Hayashi K."/>
            <person name="Inada T."/>
            <person name="Isono K."/>
            <person name="Kasai H."/>
            <person name="Kimura S."/>
            <person name="Kitakawa M."/>
            <person name="Kitagawa M."/>
            <person name="Makino K."/>
            <person name="Miki T."/>
            <person name="Mizobuchi K."/>
            <person name="Mori H."/>
            <person name="Mori T."/>
            <person name="Motomura K."/>
            <person name="Nakade S."/>
            <person name="Nakamura Y."/>
            <person name="Nashimoto H."/>
            <person name="Nishio Y."/>
            <person name="Oshima T."/>
            <person name="Saito N."/>
            <person name="Sampei G."/>
            <person name="Seki Y."/>
            <person name="Sivasundaram S."/>
            <person name="Tagami H."/>
            <person name="Takeda J."/>
            <person name="Takemoto K."/>
            <person name="Wada C."/>
            <person name="Yamamoto Y."/>
            <person name="Horiuchi T."/>
        </authorList>
    </citation>
    <scope>NUCLEOTIDE SEQUENCE [LARGE SCALE GENOMIC DNA]</scope>
    <source>
        <strain>K12 / W3110 / ATCC 27325 / DSM 5911</strain>
    </source>
</reference>
<reference key="3">
    <citation type="journal article" date="1997" name="Science">
        <title>The complete genome sequence of Escherichia coli K-12.</title>
        <authorList>
            <person name="Blattner F.R."/>
            <person name="Plunkett G. III"/>
            <person name="Bloch C.A."/>
            <person name="Perna N.T."/>
            <person name="Burland V."/>
            <person name="Riley M."/>
            <person name="Collado-Vides J."/>
            <person name="Glasner J.D."/>
            <person name="Rode C.K."/>
            <person name="Mayhew G.F."/>
            <person name="Gregor J."/>
            <person name="Davis N.W."/>
            <person name="Kirkpatrick H.A."/>
            <person name="Goeden M.A."/>
            <person name="Rose D.J."/>
            <person name="Mau B."/>
            <person name="Shao Y."/>
        </authorList>
    </citation>
    <scope>NUCLEOTIDE SEQUENCE [LARGE SCALE GENOMIC DNA]</scope>
    <source>
        <strain>K12 / MG1655 / ATCC 47076</strain>
    </source>
</reference>
<reference key="4">
    <citation type="journal article" date="2006" name="Mol. Syst. Biol.">
        <title>Highly accurate genome sequences of Escherichia coli K-12 strains MG1655 and W3110.</title>
        <authorList>
            <person name="Hayashi K."/>
            <person name="Morooka N."/>
            <person name="Yamamoto Y."/>
            <person name="Fujita K."/>
            <person name="Isono K."/>
            <person name="Choi S."/>
            <person name="Ohtsubo E."/>
            <person name="Baba T."/>
            <person name="Wanner B.L."/>
            <person name="Mori H."/>
            <person name="Horiuchi T."/>
        </authorList>
    </citation>
    <scope>NUCLEOTIDE SEQUENCE [LARGE SCALE GENOMIC DNA]</scope>
    <source>
        <strain>K12 / W3110 / ATCC 27325 / DSM 5911</strain>
    </source>
</reference>
<reference key="5">
    <citation type="journal article" date="2005" name="Science">
        <title>Global topology analysis of the Escherichia coli inner membrane proteome.</title>
        <authorList>
            <person name="Daley D.O."/>
            <person name="Rapp M."/>
            <person name="Granseth E."/>
            <person name="Melen K."/>
            <person name="Drew D."/>
            <person name="von Heijne G."/>
        </authorList>
    </citation>
    <scope>TOPOLOGY [LARGE SCALE ANALYSIS]</scope>
    <scope>SUBCELLULAR LOCATION</scope>
    <source>
        <strain>K12 / MG1655 / ATCC 47076</strain>
    </source>
</reference>
<reference key="6">
    <citation type="journal article" date="2020" name="Sci. Adv.">
        <title>Crystal structure of a YeeE/YedE family protein engaged in thiosulfate uptake.</title>
        <authorList>
            <person name="Tanaka Y."/>
            <person name="Yoshikaie K."/>
            <person name="Takeuchi A."/>
            <person name="Ichikawa M."/>
            <person name="Mori T."/>
            <person name="Uchino S."/>
            <person name="Sugano Y."/>
            <person name="Hakoshima T."/>
            <person name="Takagi H."/>
            <person name="Nonaka G."/>
            <person name="Tsukazaki T."/>
        </authorList>
    </citation>
    <scope>FUNCTION</scope>
    <scope>DISRUPTION PHENOTYPE</scope>
    <scope>MUTAGENESIS OF CYS-25; THR-27; ARG-31; GLY-70; PHE-84; CYS-94; TYR-116; ARG-223; THR-230; GLY-251; MET-292; CYS-302; SER-303; ASN-306 AND VAL-329</scope>
    <source>
        <strain>K12 / MG1655 / ATCC 47076</strain>
    </source>
</reference>
<reference key="7">
    <citation type="journal article" date="2021" name="J. Gen. Appl. Microbiol.">
        <title>Defect of RNA pyrophosphohydrolase RppH enhances fermentative production of L-cysteine in Escherichia coli.</title>
        <authorList>
            <person name="Morigasaki S."/>
            <person name="Umeyama A."/>
            <person name="Kawano Y."/>
            <person name="Aizawa Y."/>
            <person name="Ohtsu I."/>
        </authorList>
    </citation>
    <scope>FUNCTION</scope>
    <scope>INDUCTION</scope>
    <scope>DISRUPTION PHENOTYPE</scope>
</reference>
<sequence>MFSMILSGLICGALLGFVMQRGRFCLTGGFRDMYIVKNNRMFYALLIAISVQSVGVFALIQAGLLTYEAGAFPWLGTVIGGYIFGLGIVLAGGCATGTWYRAGEGLIGSWIALFTYMVMSAVMRSPHASGLNQTLQHYSTEHNSIAETFNLSVWPLVAVLLVITLWVVMKELKKPKLKVATLPPRRTGIAHILFEKRWHPFVTAVLIGLIALLAWPLSEATGRMFGLGITSPTANILQFLVAGDMKYINWGVFLVLGIFVGSFIAAKASREFRVRAADAQTTLRSGLGGVLMGFGASIAGGCSIGNGLVMTAMMTWQGWIGLVFMILGVWTASWLVYVRPQRKARLATAAAN</sequence>
<name>TSUA_ECOLI</name>
<organism>
    <name type="scientific">Escherichia coli (strain K12)</name>
    <dbReference type="NCBI Taxonomy" id="83333"/>
    <lineage>
        <taxon>Bacteria</taxon>
        <taxon>Pseudomonadati</taxon>
        <taxon>Pseudomonadota</taxon>
        <taxon>Gammaproteobacteria</taxon>
        <taxon>Enterobacterales</taxon>
        <taxon>Enterobacteriaceae</taxon>
        <taxon>Escherichia</taxon>
    </lineage>
</organism>
<evidence type="ECO:0000255" key="1"/>
<evidence type="ECO:0000269" key="2">
    <source>
    </source>
</evidence>
<evidence type="ECO:0000269" key="3">
    <source>
    </source>
</evidence>
<evidence type="ECO:0000269" key="4">
    <source>
    </source>
</evidence>
<evidence type="ECO:0000303" key="5">
    <source>
    </source>
</evidence>
<evidence type="ECO:0000305" key="6"/>
<evidence type="ECO:0000305" key="7">
    <source>
    </source>
</evidence>